<gene>
    <name type="primary">IV</name>
</gene>
<dbReference type="EMBL" id="V00606">
    <property type="protein sequence ID" value="CAA23875.1"/>
    <property type="molecule type" value="Genomic_DNA"/>
</dbReference>
<dbReference type="EMBL" id="J02448">
    <property type="protein sequence ID" value="AAA32218.1"/>
    <property type="molecule type" value="Genomic_DNA"/>
</dbReference>
<dbReference type="EMBL" id="M10641">
    <property type="protein sequence ID" value="AAA32222.1"/>
    <property type="molecule type" value="Genomic_DNA"/>
</dbReference>
<dbReference type="EMBL" id="M38348">
    <property type="protein sequence ID" value="AAA32221.1"/>
    <property type="status" value="ALT_SEQ"/>
    <property type="molecule type" value="Genomic_DNA"/>
</dbReference>
<dbReference type="PIR" id="C04268">
    <property type="entry name" value="Z4BPF1"/>
</dbReference>
<dbReference type="PDB" id="7OFH">
    <property type="method" value="EM"/>
    <property type="resolution" value="2.70 A"/>
    <property type="chains" value="A/B/C/D/E/F/G/H/I/J/K/L/M/N/O=22-426"/>
</dbReference>
<dbReference type="PDBsum" id="7OFH"/>
<dbReference type="EMDB" id="EMD-12874"/>
<dbReference type="SMR" id="P03666"/>
<dbReference type="TCDB" id="1.B.22.5.1">
    <property type="family name" value="the outer bacterial membrane secretin (secretin) family"/>
</dbReference>
<dbReference type="Proteomes" id="UP000002557">
    <property type="component" value="Genome"/>
</dbReference>
<dbReference type="Proteomes" id="UP000241027">
    <property type="component" value="Genome"/>
</dbReference>
<dbReference type="GO" id="GO:0033644">
    <property type="term" value="C:host cell membrane"/>
    <property type="evidence" value="ECO:0007669"/>
    <property type="project" value="UniProtKB-SubCell"/>
</dbReference>
<dbReference type="GO" id="GO:0016020">
    <property type="term" value="C:membrane"/>
    <property type="evidence" value="ECO:0007669"/>
    <property type="project" value="UniProtKB-KW"/>
</dbReference>
<dbReference type="GO" id="GO:0009306">
    <property type="term" value="P:protein secretion"/>
    <property type="evidence" value="ECO:0007669"/>
    <property type="project" value="InterPro"/>
</dbReference>
<dbReference type="GO" id="GO:0099045">
    <property type="term" value="P:viral extrusion"/>
    <property type="evidence" value="ECO:0007669"/>
    <property type="project" value="UniProtKB-KW"/>
</dbReference>
<dbReference type="Gene3D" id="3.30.1370.120">
    <property type="match status" value="1"/>
</dbReference>
<dbReference type="Gene3D" id="3.55.50.30">
    <property type="match status" value="1"/>
</dbReference>
<dbReference type="InterPro" id="IPR050810">
    <property type="entry name" value="Bact_Secretion_Sys_Channel"/>
</dbReference>
<dbReference type="InterPro" id="IPR049371">
    <property type="entry name" value="GspD-like_N0"/>
</dbReference>
<dbReference type="InterPro" id="IPR001775">
    <property type="entry name" value="GspD/PilQ"/>
</dbReference>
<dbReference type="InterPro" id="IPR005644">
    <property type="entry name" value="NolW-like"/>
</dbReference>
<dbReference type="InterPro" id="IPR038591">
    <property type="entry name" value="NolW-like_sf"/>
</dbReference>
<dbReference type="InterPro" id="IPR004846">
    <property type="entry name" value="T2SS/T3SS_dom"/>
</dbReference>
<dbReference type="InterPro" id="IPR004845">
    <property type="entry name" value="T2SS_GspD_CS"/>
</dbReference>
<dbReference type="PANTHER" id="PTHR30332">
    <property type="entry name" value="PROBABLE GENERAL SECRETION PATHWAY PROTEIN D"/>
    <property type="match status" value="1"/>
</dbReference>
<dbReference type="PANTHER" id="PTHR30332:SF24">
    <property type="entry name" value="SECRETIN GSPD-RELATED"/>
    <property type="match status" value="1"/>
</dbReference>
<dbReference type="Pfam" id="PF00263">
    <property type="entry name" value="Secretin"/>
    <property type="match status" value="1"/>
</dbReference>
<dbReference type="Pfam" id="PF03958">
    <property type="entry name" value="Secretin_N"/>
    <property type="match status" value="1"/>
</dbReference>
<dbReference type="Pfam" id="PF21305">
    <property type="entry name" value="type_II_gspD_N0"/>
    <property type="match status" value="1"/>
</dbReference>
<dbReference type="PRINTS" id="PR00811">
    <property type="entry name" value="BCTERIALGSPD"/>
</dbReference>
<dbReference type="PRINTS" id="PR01032">
    <property type="entry name" value="PHAGEIV"/>
</dbReference>
<dbReference type="PROSITE" id="PS00875">
    <property type="entry name" value="T2SP_D"/>
    <property type="match status" value="1"/>
</dbReference>
<organism>
    <name type="scientific">Enterobacteria phage f1</name>
    <name type="common">Bacteriophage f1</name>
    <dbReference type="NCBI Taxonomy" id="10863"/>
    <lineage>
        <taxon>Viruses</taxon>
        <taxon>Monodnaviria</taxon>
        <taxon>Loebvirae</taxon>
        <taxon>Hofneiviricota</taxon>
        <taxon>Faserviricetes</taxon>
        <taxon>Tubulavirales</taxon>
        <taxon>Inoviridae</taxon>
        <taxon>Inovirus</taxon>
        <taxon>Enterobacteria phage M13</taxon>
    </lineage>
</organism>
<name>G4P_BPF1</name>
<comment type="function">
    <text>Acts in the assembly and extrusion of the bacteriophage by forming a channel across the host outer membrane. This channel is just large enough to allow a newly synthesized phage particle to pass through. Extrusion is a process of concomitant assembly and secretion and takes place at specific assembly sites where host inner and outer membranes are in close contacts.</text>
</comment>
<comment type="subunit">
    <text evidence="1">Homomultimer. The channel is composed of 14 G4P subunits that confer a barrel-like structure. Interacts with G1P; this interaction results in a complex that spans the inner an outer host membranes (By similarity).</text>
</comment>
<comment type="subcellular location">
    <subcellularLocation>
        <location evidence="3">Host membrane</location>
        <topology evidence="3">Single-pass type I membrane protein</topology>
    </subcellularLocation>
</comment>
<comment type="similarity">
    <text evidence="3">Belongs to the inovirus G4P protein family.</text>
</comment>
<protein>
    <recommendedName>
        <fullName>Virion export protein</fullName>
    </recommendedName>
    <alternativeName>
        <fullName>Gene 4 protein</fullName>
        <shortName>G4P</shortName>
    </alternativeName>
</protein>
<organismHost>
    <name type="scientific">Escherichia coli</name>
    <dbReference type="NCBI Taxonomy" id="562"/>
</organismHost>
<sequence>MKLLNVINFVFLMFVSSSSFAQVIEMNNSSLRDFVTWYSKQTGESVIVSPDVKGTVTVYSSDVKPENLRDFFISVLRANNFDMVGSIPSIIQKYNPNNQDYIDELPSSDNQEYDDNSAPSGGFFVPQNDNVTQTFKINNVRAKDLIRVVELFVKSNTSKSSNVLSVDGSNLLVVSAPKDILDNLPQFLSTVDLPTDQILIEGLIFEVQQGDALDFSFAAGSQRGTVAGGVNTDRLTSVLSSAGGSFGIFNGDVLGLSVRALKTNSHSKILSVPRILTLSGQKGSISVGQNVPFITGRVTGESANVNNPFQTVERQNVGISMSVFPVAMAGGNIVLDITSKADSLSSSTQASDVITNQRSIATTVNLRDGQTLLLGGLTDYKNTSQDSGVPFLSKIPLIGLLFSSRSDSNEESTLYVLVKATIVRAL</sequence>
<evidence type="ECO:0000250" key="1"/>
<evidence type="ECO:0000255" key="2"/>
<evidence type="ECO:0000305" key="3"/>
<evidence type="ECO:0007829" key="4">
    <source>
        <dbReference type="PDB" id="7OFH"/>
    </source>
</evidence>
<reference key="1">
    <citation type="journal article" date="1981" name="Gene">
        <title>Nucleotide sequence and genome organisation of filamentous bacteriophages f1 and fd.</title>
        <authorList>
            <person name="Beck E."/>
            <person name="Zink B."/>
        </authorList>
    </citation>
    <scope>NUCLEOTIDE SEQUENCE [GENOMIC DNA]</scope>
</reference>
<reference key="2">
    <citation type="journal article" date="1982" name="J. Virol.">
        <title>Nucleotide sequence of bacteriophage f1 DNA.</title>
        <authorList>
            <person name="Hill D.F."/>
            <person name="Petersen G.B."/>
        </authorList>
    </citation>
    <scope>NUCLEOTIDE SEQUENCE [GENOMIC DNA]</scope>
</reference>
<reference key="3">
    <citation type="journal article" date="1979" name="J. Mol. Biol.">
        <title>DNA sequence analysis of the defective interfering particles of bacteriophage f1.</title>
        <authorList>
            <person name="Ravetch J.V."/>
            <person name="Horiuchi K."/>
            <person name="Zinder N.D."/>
        </authorList>
    </citation>
    <scope>NUCLEOTIDE SEQUENCE [GENOMIC DNA] OF 376-426</scope>
</reference>
<reference key="4">
    <citation type="journal article" date="1978" name="Bioorg. Khim.">
        <title>Nucleotide sequence of a gene IV fragment of bacteriophage f1.</title>
        <authorList>
            <person name="Grachev S.A."/>
            <person name="Kolosov M.N."/>
            <person name="Korobko V.G."/>
            <person name="Petrov N.A."/>
        </authorList>
    </citation>
    <scope>NUCLEOTIDE SEQUENCE [GENOMIC DNA] OF 341-399</scope>
</reference>
<reference key="5">
    <citation type="journal article" date="1999" name="Mol. Microbiol.">
        <title>A trans-envelope protein complex needed for filamentous phage assembly and export.</title>
        <authorList>
            <person name="Feng J.N."/>
            <person name="Model P."/>
            <person name="Russel M."/>
        </authorList>
    </citation>
    <scope>INTERACTION WITH G1P</scope>
</reference>
<feature type="signal peptide" evidence="2">
    <location>
        <begin position="1"/>
        <end position="21"/>
    </location>
</feature>
<feature type="chain" id="PRO_0000209448" description="Virion export protein">
    <location>
        <begin position="22"/>
        <end position="426"/>
    </location>
</feature>
<feature type="transmembrane region" description="Helical" evidence="2">
    <location>
        <begin position="317"/>
        <end position="337"/>
    </location>
</feature>
<feature type="sequence conflict" description="In Ref. 2; AAA32218." evidence="3" ref="2">
    <original>S</original>
    <variation>P</variation>
    <location>
        <position position="30"/>
    </location>
</feature>
<feature type="sequence conflict" description="In Ref. 2; AAA32218." evidence="3" ref="2">
    <original>D</original>
    <variation>N</variation>
    <location>
        <position position="70"/>
    </location>
</feature>
<feature type="sequence conflict" description="In Ref. 2; AAA32218." evidence="3" ref="2">
    <original>I</original>
    <variation>N</variation>
    <location>
        <position position="87"/>
    </location>
</feature>
<feature type="sequence conflict" description="In Ref. 2; AAA32218." evidence="3" ref="2">
    <original>V</original>
    <variation>I</variation>
    <location>
        <position position="166"/>
    </location>
</feature>
<feature type="sequence conflict" description="In Ref. 2; AAA32218." evidence="3" ref="2">
    <original>V</original>
    <variation>I</variation>
    <location>
        <position position="312"/>
    </location>
</feature>
<feature type="strand" evidence="4">
    <location>
        <begin position="131"/>
        <end position="136"/>
    </location>
</feature>
<feature type="turn" evidence="4">
    <location>
        <begin position="142"/>
        <end position="145"/>
    </location>
</feature>
<feature type="helix" evidence="4">
    <location>
        <begin position="147"/>
        <end position="153"/>
    </location>
</feature>
<feature type="strand" evidence="4">
    <location>
        <begin position="163"/>
        <end position="166"/>
    </location>
</feature>
<feature type="turn" evidence="4">
    <location>
        <begin position="167"/>
        <end position="170"/>
    </location>
</feature>
<feature type="strand" evidence="4">
    <location>
        <begin position="171"/>
        <end position="176"/>
    </location>
</feature>
<feature type="helix" evidence="4">
    <location>
        <begin position="180"/>
        <end position="187"/>
    </location>
</feature>
<feature type="strand" evidence="4">
    <location>
        <begin position="190"/>
        <end position="192"/>
    </location>
</feature>
<feature type="strand" evidence="4">
    <location>
        <begin position="197"/>
        <end position="208"/>
    </location>
</feature>
<feature type="strand" evidence="4">
    <location>
        <begin position="262"/>
        <end position="266"/>
    </location>
</feature>
<feature type="strand" evidence="4">
    <location>
        <begin position="268"/>
        <end position="278"/>
    </location>
</feature>
<feature type="strand" evidence="4">
    <location>
        <begin position="283"/>
        <end position="294"/>
    </location>
</feature>
<feature type="strand" evidence="4">
    <location>
        <begin position="312"/>
        <end position="327"/>
    </location>
</feature>
<feature type="strand" evidence="4">
    <location>
        <begin position="332"/>
        <end position="341"/>
    </location>
</feature>
<feature type="strand" evidence="4">
    <location>
        <begin position="349"/>
        <end position="352"/>
    </location>
</feature>
<feature type="strand" evidence="4">
    <location>
        <begin position="355"/>
        <end position="367"/>
    </location>
</feature>
<feature type="strand" evidence="4">
    <location>
        <begin position="369"/>
        <end position="381"/>
    </location>
</feature>
<feature type="strand" evidence="4">
    <location>
        <begin position="384"/>
        <end position="388"/>
    </location>
</feature>
<feature type="strand" evidence="4">
    <location>
        <begin position="410"/>
        <end position="422"/>
    </location>
</feature>
<proteinExistence type="evidence at protein level"/>
<accession>P03666</accession>
<accession>Q96223</accession>
<keyword id="KW-0002">3D-structure</keyword>
<keyword id="KW-1043">Host membrane</keyword>
<keyword id="KW-0472">Membrane</keyword>
<keyword id="KW-0732">Signal</keyword>
<keyword id="KW-0812">Transmembrane</keyword>
<keyword id="KW-1133">Transmembrane helix</keyword>
<keyword id="KW-1249">Viral extrusion</keyword>
<keyword id="KW-1188">Viral release from host cell</keyword>